<protein>
    <recommendedName>
        <fullName evidence="1">Small ribosomal subunit protein uS5</fullName>
    </recommendedName>
    <alternativeName>
        <fullName evidence="2">30S ribosomal protein S5</fullName>
    </alternativeName>
</protein>
<name>RS5_BURM1</name>
<feature type="chain" id="PRO_1000140843" description="Small ribosomal subunit protein uS5">
    <location>
        <begin position="1"/>
        <end position="172"/>
    </location>
</feature>
<feature type="domain" description="S5 DRBM" evidence="1">
    <location>
        <begin position="17"/>
        <end position="80"/>
    </location>
</feature>
<dbReference type="EMBL" id="CP000868">
    <property type="protein sequence ID" value="ABX13961.1"/>
    <property type="molecule type" value="Genomic_DNA"/>
</dbReference>
<dbReference type="EMBL" id="AP009385">
    <property type="protein sequence ID" value="BAG44873.1"/>
    <property type="molecule type" value="Genomic_DNA"/>
</dbReference>
<dbReference type="RefSeq" id="WP_004197945.1">
    <property type="nucleotide sequence ID" value="NC_010804.1"/>
</dbReference>
<dbReference type="SMR" id="A9ADL0"/>
<dbReference type="STRING" id="395019.BMULJ_02988"/>
<dbReference type="GeneID" id="93126536"/>
<dbReference type="KEGG" id="bmj:BMULJ_02988"/>
<dbReference type="KEGG" id="bmu:Bmul_0266"/>
<dbReference type="eggNOG" id="COG0098">
    <property type="taxonomic scope" value="Bacteria"/>
</dbReference>
<dbReference type="HOGENOM" id="CLU_065898_2_2_4"/>
<dbReference type="Proteomes" id="UP000008815">
    <property type="component" value="Chromosome 1"/>
</dbReference>
<dbReference type="GO" id="GO:0015935">
    <property type="term" value="C:small ribosomal subunit"/>
    <property type="evidence" value="ECO:0007669"/>
    <property type="project" value="InterPro"/>
</dbReference>
<dbReference type="GO" id="GO:0019843">
    <property type="term" value="F:rRNA binding"/>
    <property type="evidence" value="ECO:0007669"/>
    <property type="project" value="UniProtKB-UniRule"/>
</dbReference>
<dbReference type="GO" id="GO:0003735">
    <property type="term" value="F:structural constituent of ribosome"/>
    <property type="evidence" value="ECO:0007669"/>
    <property type="project" value="InterPro"/>
</dbReference>
<dbReference type="GO" id="GO:0006412">
    <property type="term" value="P:translation"/>
    <property type="evidence" value="ECO:0007669"/>
    <property type="project" value="UniProtKB-UniRule"/>
</dbReference>
<dbReference type="FunFam" id="3.30.160.20:FF:000001">
    <property type="entry name" value="30S ribosomal protein S5"/>
    <property type="match status" value="1"/>
</dbReference>
<dbReference type="FunFam" id="3.30.230.10:FF:000002">
    <property type="entry name" value="30S ribosomal protein S5"/>
    <property type="match status" value="1"/>
</dbReference>
<dbReference type="Gene3D" id="3.30.160.20">
    <property type="match status" value="1"/>
</dbReference>
<dbReference type="Gene3D" id="3.30.230.10">
    <property type="match status" value="1"/>
</dbReference>
<dbReference type="HAMAP" id="MF_01307_B">
    <property type="entry name" value="Ribosomal_uS5_B"/>
    <property type="match status" value="1"/>
</dbReference>
<dbReference type="InterPro" id="IPR020568">
    <property type="entry name" value="Ribosomal_Su5_D2-typ_SF"/>
</dbReference>
<dbReference type="InterPro" id="IPR000851">
    <property type="entry name" value="Ribosomal_uS5"/>
</dbReference>
<dbReference type="InterPro" id="IPR005712">
    <property type="entry name" value="Ribosomal_uS5_bac-type"/>
</dbReference>
<dbReference type="InterPro" id="IPR005324">
    <property type="entry name" value="Ribosomal_uS5_C"/>
</dbReference>
<dbReference type="InterPro" id="IPR013810">
    <property type="entry name" value="Ribosomal_uS5_N"/>
</dbReference>
<dbReference type="InterPro" id="IPR018192">
    <property type="entry name" value="Ribosomal_uS5_N_CS"/>
</dbReference>
<dbReference type="InterPro" id="IPR014721">
    <property type="entry name" value="Ribsml_uS5_D2-typ_fold_subgr"/>
</dbReference>
<dbReference type="NCBIfam" id="TIGR01021">
    <property type="entry name" value="rpsE_bact"/>
    <property type="match status" value="1"/>
</dbReference>
<dbReference type="PANTHER" id="PTHR48277">
    <property type="entry name" value="MITOCHONDRIAL RIBOSOMAL PROTEIN S5"/>
    <property type="match status" value="1"/>
</dbReference>
<dbReference type="PANTHER" id="PTHR48277:SF1">
    <property type="entry name" value="MITOCHONDRIAL RIBOSOMAL PROTEIN S5"/>
    <property type="match status" value="1"/>
</dbReference>
<dbReference type="Pfam" id="PF00333">
    <property type="entry name" value="Ribosomal_S5"/>
    <property type="match status" value="1"/>
</dbReference>
<dbReference type="Pfam" id="PF03719">
    <property type="entry name" value="Ribosomal_S5_C"/>
    <property type="match status" value="1"/>
</dbReference>
<dbReference type="SUPFAM" id="SSF54768">
    <property type="entry name" value="dsRNA-binding domain-like"/>
    <property type="match status" value="1"/>
</dbReference>
<dbReference type="SUPFAM" id="SSF54211">
    <property type="entry name" value="Ribosomal protein S5 domain 2-like"/>
    <property type="match status" value="1"/>
</dbReference>
<dbReference type="PROSITE" id="PS00585">
    <property type="entry name" value="RIBOSOMAL_S5"/>
    <property type="match status" value="1"/>
</dbReference>
<dbReference type="PROSITE" id="PS50881">
    <property type="entry name" value="S5_DSRBD"/>
    <property type="match status" value="1"/>
</dbReference>
<evidence type="ECO:0000255" key="1">
    <source>
        <dbReference type="HAMAP-Rule" id="MF_01307"/>
    </source>
</evidence>
<evidence type="ECO:0000305" key="2"/>
<proteinExistence type="inferred from homology"/>
<organism>
    <name type="scientific">Burkholderia multivorans (strain ATCC 17616 / 249)</name>
    <dbReference type="NCBI Taxonomy" id="395019"/>
    <lineage>
        <taxon>Bacteria</taxon>
        <taxon>Pseudomonadati</taxon>
        <taxon>Pseudomonadota</taxon>
        <taxon>Betaproteobacteria</taxon>
        <taxon>Burkholderiales</taxon>
        <taxon>Burkholderiaceae</taxon>
        <taxon>Burkholderia</taxon>
        <taxon>Burkholderia cepacia complex</taxon>
    </lineage>
</organism>
<gene>
    <name evidence="1" type="primary">rpsE</name>
    <name type="ordered locus">Bmul_0266</name>
    <name type="ordered locus">BMULJ_02988</name>
</gene>
<keyword id="KW-1185">Reference proteome</keyword>
<keyword id="KW-0687">Ribonucleoprotein</keyword>
<keyword id="KW-0689">Ribosomal protein</keyword>
<keyword id="KW-0694">RNA-binding</keyword>
<keyword id="KW-0699">rRNA-binding</keyword>
<accession>A9ADL0</accession>
<comment type="function">
    <text evidence="1">With S4 and S12 plays an important role in translational accuracy.</text>
</comment>
<comment type="function">
    <text evidence="1">Located at the back of the 30S subunit body where it stabilizes the conformation of the head with respect to the body.</text>
</comment>
<comment type="subunit">
    <text evidence="1">Part of the 30S ribosomal subunit. Contacts proteins S4 and S8.</text>
</comment>
<comment type="domain">
    <text>The N-terminal domain interacts with the head of the 30S subunit; the C-terminal domain interacts with the body and contacts protein S4. The interaction surface between S4 and S5 is involved in control of translational fidelity.</text>
</comment>
<comment type="similarity">
    <text evidence="1">Belongs to the universal ribosomal protein uS5 family.</text>
</comment>
<reference key="1">
    <citation type="submission" date="2007-10" db="EMBL/GenBank/DDBJ databases">
        <title>Complete sequence of chromosome 1 of Burkholderia multivorans ATCC 17616.</title>
        <authorList>
            <person name="Copeland A."/>
            <person name="Lucas S."/>
            <person name="Lapidus A."/>
            <person name="Barry K."/>
            <person name="Glavina del Rio T."/>
            <person name="Dalin E."/>
            <person name="Tice H."/>
            <person name="Pitluck S."/>
            <person name="Chain P."/>
            <person name="Malfatti S."/>
            <person name="Shin M."/>
            <person name="Vergez L."/>
            <person name="Schmutz J."/>
            <person name="Larimer F."/>
            <person name="Land M."/>
            <person name="Hauser L."/>
            <person name="Kyrpides N."/>
            <person name="Kim E."/>
            <person name="Tiedje J."/>
            <person name="Richardson P."/>
        </authorList>
    </citation>
    <scope>NUCLEOTIDE SEQUENCE [LARGE SCALE GENOMIC DNA]</scope>
    <source>
        <strain>ATCC 17616 / 249</strain>
    </source>
</reference>
<reference key="2">
    <citation type="submission" date="2007-04" db="EMBL/GenBank/DDBJ databases">
        <title>Complete genome sequence of Burkholderia multivorans ATCC 17616.</title>
        <authorList>
            <person name="Ohtsubo Y."/>
            <person name="Yamashita A."/>
            <person name="Kurokawa K."/>
            <person name="Takami H."/>
            <person name="Yuhara S."/>
            <person name="Nishiyama E."/>
            <person name="Endo R."/>
            <person name="Miyazaki R."/>
            <person name="Ono A."/>
            <person name="Yano K."/>
            <person name="Ito M."/>
            <person name="Sota M."/>
            <person name="Yuji N."/>
            <person name="Hattori M."/>
            <person name="Tsuda M."/>
        </authorList>
    </citation>
    <scope>NUCLEOTIDE SEQUENCE [LARGE SCALE GENOMIC DNA]</scope>
    <source>
        <strain>ATCC 17616 / 249</strain>
    </source>
</reference>
<sequence>MAKMQAKVQADERDDGLREKMISVNRVTKVVKGGRILGFAALTVVGDGDGRVGMGKGKAKEVPVAVQKAMEQARRNMFKVPLKNGTLQHEVHGKHGASTVLLAPAKDGTGVIAGGPMRAVFDVMGVQNVVAKSHGSTNPYNLVRATLDGLRKQSTPADIAAKRGKSVEEILG</sequence>